<accession>Q5E2H3</accession>
<evidence type="ECO:0000255" key="1">
    <source>
        <dbReference type="HAMAP-Rule" id="MF_00249"/>
    </source>
</evidence>
<evidence type="ECO:0000256" key="2">
    <source>
        <dbReference type="SAM" id="MobiDB-lite"/>
    </source>
</evidence>
<proteinExistence type="inferred from homology"/>
<keyword id="KW-0067">ATP-binding</keyword>
<keyword id="KW-0143">Chaperone</keyword>
<keyword id="KW-0963">Cytoplasm</keyword>
<keyword id="KW-0547">Nucleotide-binding</keyword>
<keyword id="KW-1185">Reference proteome</keyword>
<dbReference type="EMBL" id="CP000020">
    <property type="protein sequence ID" value="AAW86773.1"/>
    <property type="molecule type" value="Genomic_DNA"/>
</dbReference>
<dbReference type="RefSeq" id="WP_011262689.1">
    <property type="nucleotide sequence ID" value="NC_006840.2"/>
</dbReference>
<dbReference type="RefSeq" id="YP_205661.1">
    <property type="nucleotide sequence ID" value="NC_006840.2"/>
</dbReference>
<dbReference type="SMR" id="Q5E2H3"/>
<dbReference type="STRING" id="312309.VF_2278"/>
<dbReference type="EnsemblBacteria" id="AAW86773">
    <property type="protein sequence ID" value="AAW86773"/>
    <property type="gene ID" value="VF_2278"/>
</dbReference>
<dbReference type="GeneID" id="54164993"/>
<dbReference type="KEGG" id="vfi:VF_2278"/>
<dbReference type="PATRIC" id="fig|312309.11.peg.2316"/>
<dbReference type="eggNOG" id="COG1220">
    <property type="taxonomic scope" value="Bacteria"/>
</dbReference>
<dbReference type="HOGENOM" id="CLU_033123_0_0_6"/>
<dbReference type="OrthoDB" id="9804062at2"/>
<dbReference type="Proteomes" id="UP000000537">
    <property type="component" value="Chromosome I"/>
</dbReference>
<dbReference type="GO" id="GO:0009376">
    <property type="term" value="C:HslUV protease complex"/>
    <property type="evidence" value="ECO:0007669"/>
    <property type="project" value="UniProtKB-UniRule"/>
</dbReference>
<dbReference type="GO" id="GO:0005524">
    <property type="term" value="F:ATP binding"/>
    <property type="evidence" value="ECO:0007669"/>
    <property type="project" value="UniProtKB-UniRule"/>
</dbReference>
<dbReference type="GO" id="GO:0016887">
    <property type="term" value="F:ATP hydrolysis activity"/>
    <property type="evidence" value="ECO:0007669"/>
    <property type="project" value="InterPro"/>
</dbReference>
<dbReference type="GO" id="GO:0008233">
    <property type="term" value="F:peptidase activity"/>
    <property type="evidence" value="ECO:0007669"/>
    <property type="project" value="InterPro"/>
</dbReference>
<dbReference type="GO" id="GO:0036402">
    <property type="term" value="F:proteasome-activating activity"/>
    <property type="evidence" value="ECO:0007669"/>
    <property type="project" value="UniProtKB-UniRule"/>
</dbReference>
<dbReference type="GO" id="GO:0043335">
    <property type="term" value="P:protein unfolding"/>
    <property type="evidence" value="ECO:0007669"/>
    <property type="project" value="UniProtKB-UniRule"/>
</dbReference>
<dbReference type="GO" id="GO:0051603">
    <property type="term" value="P:proteolysis involved in protein catabolic process"/>
    <property type="evidence" value="ECO:0007669"/>
    <property type="project" value="TreeGrafter"/>
</dbReference>
<dbReference type="CDD" id="cd19498">
    <property type="entry name" value="RecA-like_HslU"/>
    <property type="match status" value="1"/>
</dbReference>
<dbReference type="FunFam" id="1.10.8.10:FF:000028">
    <property type="entry name" value="ATP-dependent protease ATPase subunit HslU"/>
    <property type="match status" value="1"/>
</dbReference>
<dbReference type="FunFam" id="1.10.8.60:FF:000027">
    <property type="entry name" value="ATP-dependent protease ATPase subunit HslU"/>
    <property type="match status" value="1"/>
</dbReference>
<dbReference type="FunFam" id="3.40.50.300:FF:000213">
    <property type="entry name" value="ATP-dependent protease ATPase subunit HslU"/>
    <property type="match status" value="1"/>
</dbReference>
<dbReference type="FunFam" id="3.40.50.300:FF:000220">
    <property type="entry name" value="ATP-dependent protease ATPase subunit HslU"/>
    <property type="match status" value="1"/>
</dbReference>
<dbReference type="Gene3D" id="1.10.8.60">
    <property type="match status" value="1"/>
</dbReference>
<dbReference type="Gene3D" id="1.10.8.10">
    <property type="entry name" value="DNA helicase RuvA subunit, C-terminal domain"/>
    <property type="match status" value="1"/>
</dbReference>
<dbReference type="Gene3D" id="3.40.50.300">
    <property type="entry name" value="P-loop containing nucleotide triphosphate hydrolases"/>
    <property type="match status" value="2"/>
</dbReference>
<dbReference type="HAMAP" id="MF_00249">
    <property type="entry name" value="HslU"/>
    <property type="match status" value="1"/>
</dbReference>
<dbReference type="InterPro" id="IPR003593">
    <property type="entry name" value="AAA+_ATPase"/>
</dbReference>
<dbReference type="InterPro" id="IPR050052">
    <property type="entry name" value="ATP-dep_Clp_protease_ClpX"/>
</dbReference>
<dbReference type="InterPro" id="IPR003959">
    <property type="entry name" value="ATPase_AAA_core"/>
</dbReference>
<dbReference type="InterPro" id="IPR019489">
    <property type="entry name" value="Clp_ATPase_C"/>
</dbReference>
<dbReference type="InterPro" id="IPR004491">
    <property type="entry name" value="HslU"/>
</dbReference>
<dbReference type="InterPro" id="IPR027417">
    <property type="entry name" value="P-loop_NTPase"/>
</dbReference>
<dbReference type="NCBIfam" id="TIGR00390">
    <property type="entry name" value="hslU"/>
    <property type="match status" value="1"/>
</dbReference>
<dbReference type="NCBIfam" id="NF003544">
    <property type="entry name" value="PRK05201.1"/>
    <property type="match status" value="1"/>
</dbReference>
<dbReference type="PANTHER" id="PTHR48102">
    <property type="entry name" value="ATP-DEPENDENT CLP PROTEASE ATP-BINDING SUBUNIT CLPX-LIKE, MITOCHONDRIAL-RELATED"/>
    <property type="match status" value="1"/>
</dbReference>
<dbReference type="PANTHER" id="PTHR48102:SF3">
    <property type="entry name" value="ATP-DEPENDENT PROTEASE ATPASE SUBUNIT HSLU"/>
    <property type="match status" value="1"/>
</dbReference>
<dbReference type="Pfam" id="PF00004">
    <property type="entry name" value="AAA"/>
    <property type="match status" value="1"/>
</dbReference>
<dbReference type="Pfam" id="PF07724">
    <property type="entry name" value="AAA_2"/>
    <property type="match status" value="1"/>
</dbReference>
<dbReference type="SMART" id="SM00382">
    <property type="entry name" value="AAA"/>
    <property type="match status" value="1"/>
</dbReference>
<dbReference type="SMART" id="SM01086">
    <property type="entry name" value="ClpB_D2-small"/>
    <property type="match status" value="1"/>
</dbReference>
<dbReference type="SUPFAM" id="SSF52540">
    <property type="entry name" value="P-loop containing nucleoside triphosphate hydrolases"/>
    <property type="match status" value="1"/>
</dbReference>
<protein>
    <recommendedName>
        <fullName evidence="1">ATP-dependent protease ATPase subunit HslU</fullName>
    </recommendedName>
    <alternativeName>
        <fullName evidence="1">Unfoldase HslU</fullName>
    </alternativeName>
</protein>
<reference key="1">
    <citation type="journal article" date="2005" name="Proc. Natl. Acad. Sci. U.S.A.">
        <title>Complete genome sequence of Vibrio fischeri: a symbiotic bacterium with pathogenic congeners.</title>
        <authorList>
            <person name="Ruby E.G."/>
            <person name="Urbanowski M."/>
            <person name="Campbell J."/>
            <person name="Dunn A."/>
            <person name="Faini M."/>
            <person name="Gunsalus R."/>
            <person name="Lostroh P."/>
            <person name="Lupp C."/>
            <person name="McCann J."/>
            <person name="Millikan D."/>
            <person name="Schaefer A."/>
            <person name="Stabb E."/>
            <person name="Stevens A."/>
            <person name="Visick K."/>
            <person name="Whistler C."/>
            <person name="Greenberg E.P."/>
        </authorList>
    </citation>
    <scope>NUCLEOTIDE SEQUENCE [LARGE SCALE GENOMIC DNA]</scope>
    <source>
        <strain>ATCC 700601 / ES114</strain>
    </source>
</reference>
<comment type="function">
    <text evidence="1">ATPase subunit of a proteasome-like degradation complex; this subunit has chaperone activity. The binding of ATP and its subsequent hydrolysis by HslU are essential for unfolding of protein substrates subsequently hydrolyzed by HslV. HslU recognizes the N-terminal part of its protein substrates and unfolds these before they are guided to HslV for hydrolysis.</text>
</comment>
<comment type="subunit">
    <text evidence="1">A double ring-shaped homohexamer of HslV is capped on each side by a ring-shaped HslU homohexamer. The assembly of the HslU/HslV complex is dependent on binding of ATP.</text>
</comment>
<comment type="subcellular location">
    <subcellularLocation>
        <location evidence="1">Cytoplasm</location>
    </subcellularLocation>
</comment>
<comment type="similarity">
    <text evidence="1">Belongs to the ClpX chaperone family. HslU subfamily.</text>
</comment>
<sequence length="444" mass="49596">MSEMTPREIVHELDSHIIGQDKAKRSVAIALRNRWRRMQLAPELRTEVTPKNILMIGPTGVGKTEIARRLAKLANAPFIKVEATKFTEVGYVGKEVESIIRDLTDVAIKMTHQQAVEKVKFRAEEHAEDRILDILLPPARDAWGNNEEGNNDSGTRQSFRKKLREGKLDDKEIEVDVAAPQVGVEIMAPPGMEEMTNQLQGMFQNLSGGNTTKKRKMKIVDALKALTEEEGAKLVNPEELKEQAIFNVENHGIVFIDEIDKICKGSNSHSGDVSREGVQRDLLPLVEGSTVSTKHGMVKTDHMLFITSGAFQMAKPSDLIPELQGRLPIRVELEALTADDFKRILTEPNASLTEQYIALLATENVKVEFTEDGISRIAESAFQVNETTENIGARRLHTVMERLMEEISYDASEKNGESLIVDAEYVSSRLGELVADEDLSRFIL</sequence>
<feature type="chain" id="PRO_1000012826" description="ATP-dependent protease ATPase subunit HslU">
    <location>
        <begin position="1"/>
        <end position="444"/>
    </location>
</feature>
<feature type="region of interest" description="Disordered" evidence="2">
    <location>
        <begin position="141"/>
        <end position="161"/>
    </location>
</feature>
<feature type="compositionally biased region" description="Polar residues" evidence="2">
    <location>
        <begin position="147"/>
        <end position="157"/>
    </location>
</feature>
<feature type="binding site" evidence="1">
    <location>
        <position position="18"/>
    </location>
    <ligand>
        <name>ATP</name>
        <dbReference type="ChEBI" id="CHEBI:30616"/>
    </ligand>
</feature>
<feature type="binding site" evidence="1">
    <location>
        <begin position="60"/>
        <end position="65"/>
    </location>
    <ligand>
        <name>ATP</name>
        <dbReference type="ChEBI" id="CHEBI:30616"/>
    </ligand>
</feature>
<feature type="binding site" evidence="1">
    <location>
        <position position="257"/>
    </location>
    <ligand>
        <name>ATP</name>
        <dbReference type="ChEBI" id="CHEBI:30616"/>
    </ligand>
</feature>
<feature type="binding site" evidence="1">
    <location>
        <position position="322"/>
    </location>
    <ligand>
        <name>ATP</name>
        <dbReference type="ChEBI" id="CHEBI:30616"/>
    </ligand>
</feature>
<feature type="binding site" evidence="1">
    <location>
        <position position="394"/>
    </location>
    <ligand>
        <name>ATP</name>
        <dbReference type="ChEBI" id="CHEBI:30616"/>
    </ligand>
</feature>
<gene>
    <name evidence="1" type="primary">hslU</name>
    <name type="ordered locus">VF_2278</name>
</gene>
<organism>
    <name type="scientific">Aliivibrio fischeri (strain ATCC 700601 / ES114)</name>
    <name type="common">Vibrio fischeri</name>
    <dbReference type="NCBI Taxonomy" id="312309"/>
    <lineage>
        <taxon>Bacteria</taxon>
        <taxon>Pseudomonadati</taxon>
        <taxon>Pseudomonadota</taxon>
        <taxon>Gammaproteobacteria</taxon>
        <taxon>Vibrionales</taxon>
        <taxon>Vibrionaceae</taxon>
        <taxon>Aliivibrio</taxon>
    </lineage>
</organism>
<name>HSLU_ALIF1</name>